<keyword id="KW-0067">ATP-binding</keyword>
<keyword id="KW-0119">Carbohydrate metabolism</keyword>
<keyword id="KW-0963">Cytoplasm</keyword>
<keyword id="KW-0418">Kinase</keyword>
<keyword id="KW-0547">Nucleotide-binding</keyword>
<keyword id="KW-1185">Reference proteome</keyword>
<keyword id="KW-0808">Transferase</keyword>
<keyword id="KW-0859">Xylose metabolism</keyword>
<gene>
    <name type="primary">xkiA</name>
    <name type="ORF">AO090020000603</name>
</gene>
<proteinExistence type="evidence at transcript level"/>
<name>XKS1_ASPOR</name>
<comment type="function">
    <text evidence="1">Highly specific D-xylulose kinase which participates in the catabolism of xylose. Xylose is a major component of hemicelluloses such as xylan. Most fungi utilize D-xylose via three enzymatic reactions, xylose reductase (XR), xylitol dehydrogenase (XDH), and xylulokinase, to form xylulose 5-phosphate, which enters pentose phosphate pathway (By similarity).</text>
</comment>
<comment type="catalytic activity">
    <reaction>
        <text>D-xylulose + ATP = D-xylulose 5-phosphate + ADP + H(+)</text>
        <dbReference type="Rhea" id="RHEA:10964"/>
        <dbReference type="ChEBI" id="CHEBI:15378"/>
        <dbReference type="ChEBI" id="CHEBI:17140"/>
        <dbReference type="ChEBI" id="CHEBI:30616"/>
        <dbReference type="ChEBI" id="CHEBI:57737"/>
        <dbReference type="ChEBI" id="CHEBI:456216"/>
        <dbReference type="EC" id="2.7.1.17"/>
    </reaction>
</comment>
<comment type="subcellular location">
    <subcellularLocation>
        <location evidence="1">Cytoplasm</location>
    </subcellularLocation>
</comment>
<comment type="induction">
    <text>By D-xylose, L-arabinose or L-arabitol.</text>
</comment>
<comment type="similarity">
    <text evidence="2">Belongs to the FGGY kinase family.</text>
</comment>
<reference key="1">
    <citation type="journal article" date="2005" name="Nature">
        <title>Genome sequencing and analysis of Aspergillus oryzae.</title>
        <authorList>
            <person name="Machida M."/>
            <person name="Asai K."/>
            <person name="Sano M."/>
            <person name="Tanaka T."/>
            <person name="Kumagai T."/>
            <person name="Terai G."/>
            <person name="Kusumoto K."/>
            <person name="Arima T."/>
            <person name="Akita O."/>
            <person name="Kashiwagi Y."/>
            <person name="Abe K."/>
            <person name="Gomi K."/>
            <person name="Horiuchi H."/>
            <person name="Kitamoto K."/>
            <person name="Kobayashi T."/>
            <person name="Takeuchi M."/>
            <person name="Denning D.W."/>
            <person name="Galagan J.E."/>
            <person name="Nierman W.C."/>
            <person name="Yu J."/>
            <person name="Archer D.B."/>
            <person name="Bennett J.W."/>
            <person name="Bhatnagar D."/>
            <person name="Cleveland T.E."/>
            <person name="Fedorova N.D."/>
            <person name="Gotoh O."/>
            <person name="Horikawa H."/>
            <person name="Hosoyama A."/>
            <person name="Ichinomiya M."/>
            <person name="Igarashi R."/>
            <person name="Iwashita K."/>
            <person name="Juvvadi P.R."/>
            <person name="Kato M."/>
            <person name="Kato Y."/>
            <person name="Kin T."/>
            <person name="Kokubun A."/>
            <person name="Maeda H."/>
            <person name="Maeyama N."/>
            <person name="Maruyama J."/>
            <person name="Nagasaki H."/>
            <person name="Nakajima T."/>
            <person name="Oda K."/>
            <person name="Okada K."/>
            <person name="Paulsen I."/>
            <person name="Sakamoto K."/>
            <person name="Sawano T."/>
            <person name="Takahashi M."/>
            <person name="Takase K."/>
            <person name="Terabayashi Y."/>
            <person name="Wortman J.R."/>
            <person name="Yamada O."/>
            <person name="Yamagata Y."/>
            <person name="Anazawa H."/>
            <person name="Hata Y."/>
            <person name="Koide Y."/>
            <person name="Komori T."/>
            <person name="Koyama Y."/>
            <person name="Minetoki T."/>
            <person name="Suharnan S."/>
            <person name="Tanaka A."/>
            <person name="Isono K."/>
            <person name="Kuhara S."/>
            <person name="Ogasawara N."/>
            <person name="Kikuchi H."/>
        </authorList>
    </citation>
    <scope>NUCLEOTIDE SEQUENCE [LARGE SCALE GENOMIC DNA]</scope>
    <source>
        <strain>ATCC 42149 / RIB 40</strain>
    </source>
</reference>
<sequence>MQGPLYIGFDLSTQQLKALVVNSDLKVVYVSKFDFDADSRGFPIKKGVITNEAEHEVYAPVALWLQALDGVLEGLKKQGLDFARVKGISGAGQQHGSVYWGQDAERLLKELDSGKSLEDQLSGAFSHPYSPNWQDSSTQKECDEFDAFLGGADKLANATGSKAHHRFTGPQILRFQRKYPEVYKKTSRISLVSSFLASLFLGHIAPLDTSDVCGMNLWNIKQGAYDEKLLQLCAGPSGVEDLKRKLGAVPEDGGINLGQIDRYYIERYGFSSDCTIIPATGDNPATILALPLRPSDAMVSLGTSTTFLMSTPNYMPDPATHFFNHPTTAGLYMFMLCYKNGGLAREHIRDAINDKLGMAGDKDPWANFDKITLETAPMGQKKDSDPMKMGLFFPRPEIVPNLRAGQWRFDYNPADGSLHETNGGWNKPADEARAIVESQFLSLRLRSRGLTASPGQGMPAQPRRVYLVGGGSKNKAIAKVAGEILGGSDGVYKLEIGDNACALGAAYKAVWALERKDGQTFEDLIGQRWREEDFIEKIADGYQKGVFEKYGAALEGFEKMELQVLKQEGETR</sequence>
<organism>
    <name type="scientific">Aspergillus oryzae (strain ATCC 42149 / RIB 40)</name>
    <name type="common">Yellow koji mold</name>
    <dbReference type="NCBI Taxonomy" id="510516"/>
    <lineage>
        <taxon>Eukaryota</taxon>
        <taxon>Fungi</taxon>
        <taxon>Dikarya</taxon>
        <taxon>Ascomycota</taxon>
        <taxon>Pezizomycotina</taxon>
        <taxon>Eurotiomycetes</taxon>
        <taxon>Eurotiomycetidae</taxon>
        <taxon>Eurotiales</taxon>
        <taxon>Aspergillaceae</taxon>
        <taxon>Aspergillus</taxon>
        <taxon>Aspergillus subgen. Circumdati</taxon>
    </lineage>
</organism>
<evidence type="ECO:0000250" key="1"/>
<evidence type="ECO:0000305" key="2"/>
<feature type="chain" id="PRO_0000393522" description="Probable D-xylulose kinase A">
    <location>
        <begin position="1"/>
        <end position="572"/>
    </location>
</feature>
<feature type="binding site" evidence="1">
    <location>
        <position position="95"/>
    </location>
    <ligand>
        <name>substrate</name>
    </ligand>
</feature>
<feature type="binding site" evidence="1">
    <location>
        <position position="166"/>
    </location>
    <ligand>
        <name>substrate</name>
    </ligand>
</feature>
<feature type="binding site" evidence="1">
    <location>
        <position position="282"/>
    </location>
    <ligand>
        <name>substrate</name>
    </ligand>
</feature>
<feature type="binding site" evidence="1">
    <location>
        <position position="283"/>
    </location>
    <ligand>
        <name>substrate</name>
    </ligand>
</feature>
<feature type="binding site" evidence="1">
    <location>
        <position position="365"/>
    </location>
    <ligand>
        <name>ATP</name>
        <dbReference type="ChEBI" id="CHEBI:30616"/>
    </ligand>
</feature>
<feature type="binding site" evidence="1">
    <location>
        <begin position="470"/>
        <end position="471"/>
    </location>
    <ligand>
        <name>ATP</name>
        <dbReference type="ChEBI" id="CHEBI:30616"/>
    </ligand>
</feature>
<feature type="binding site" evidence="1">
    <location>
        <position position="474"/>
    </location>
    <ligand>
        <name>ATP</name>
        <dbReference type="ChEBI" id="CHEBI:30616"/>
    </ligand>
</feature>
<accession>Q2U3V4</accession>
<protein>
    <recommendedName>
        <fullName>Probable D-xylulose kinase A</fullName>
        <shortName>Xylulokinase A</shortName>
        <ecNumber>2.7.1.17</ecNumber>
    </recommendedName>
</protein>
<dbReference type="EC" id="2.7.1.17"/>
<dbReference type="EMBL" id="BA000054">
    <property type="protein sequence ID" value="BAE63761.1"/>
    <property type="molecule type" value="Genomic_DNA"/>
</dbReference>
<dbReference type="RefSeq" id="XP_001824894.1">
    <property type="nucleotide sequence ID" value="XM_001824842.2"/>
</dbReference>
<dbReference type="SMR" id="Q2U3V4"/>
<dbReference type="STRING" id="510516.Q2U3V4"/>
<dbReference type="EnsemblFungi" id="BAE63761">
    <property type="protein sequence ID" value="BAE63761"/>
    <property type="gene ID" value="AO090020000603"/>
</dbReference>
<dbReference type="GeneID" id="5997088"/>
<dbReference type="KEGG" id="aor:AO090020000603"/>
<dbReference type="VEuPathDB" id="FungiDB:AO090020000603"/>
<dbReference type="HOGENOM" id="CLU_016149_5_0_1"/>
<dbReference type="OMA" id="NSCALGG"/>
<dbReference type="OrthoDB" id="27970at5052"/>
<dbReference type="Proteomes" id="UP000006564">
    <property type="component" value="Chromosome 6"/>
</dbReference>
<dbReference type="GO" id="GO:0005829">
    <property type="term" value="C:cytosol"/>
    <property type="evidence" value="ECO:0007669"/>
    <property type="project" value="TreeGrafter"/>
</dbReference>
<dbReference type="GO" id="GO:0005524">
    <property type="term" value="F:ATP binding"/>
    <property type="evidence" value="ECO:0007669"/>
    <property type="project" value="UniProtKB-KW"/>
</dbReference>
<dbReference type="GO" id="GO:0004856">
    <property type="term" value="F:D-xylulokinase activity"/>
    <property type="evidence" value="ECO:0007669"/>
    <property type="project" value="UniProtKB-EC"/>
</dbReference>
<dbReference type="GO" id="GO:0042732">
    <property type="term" value="P:D-xylose metabolic process"/>
    <property type="evidence" value="ECO:0007669"/>
    <property type="project" value="UniProtKB-KW"/>
</dbReference>
<dbReference type="GO" id="GO:0005997">
    <property type="term" value="P:xylulose metabolic process"/>
    <property type="evidence" value="ECO:0007669"/>
    <property type="project" value="TreeGrafter"/>
</dbReference>
<dbReference type="CDD" id="cd07776">
    <property type="entry name" value="ASKHA_NBD_FGGY_SpXK-like"/>
    <property type="match status" value="1"/>
</dbReference>
<dbReference type="FunFam" id="3.30.420.40:FF:000118">
    <property type="entry name" value="Xylulose kinase 2"/>
    <property type="match status" value="1"/>
</dbReference>
<dbReference type="Gene3D" id="3.30.420.40">
    <property type="match status" value="2"/>
</dbReference>
<dbReference type="InterPro" id="IPR043129">
    <property type="entry name" value="ATPase_NBD"/>
</dbReference>
<dbReference type="InterPro" id="IPR042024">
    <property type="entry name" value="D-XK_euk"/>
</dbReference>
<dbReference type="InterPro" id="IPR018485">
    <property type="entry name" value="FGGY_C"/>
</dbReference>
<dbReference type="InterPro" id="IPR018484">
    <property type="entry name" value="FGGY_N"/>
</dbReference>
<dbReference type="PANTHER" id="PTHR10196">
    <property type="entry name" value="SUGAR KINASE"/>
    <property type="match status" value="1"/>
</dbReference>
<dbReference type="PANTHER" id="PTHR10196:SF57">
    <property type="entry name" value="XYLULOSE KINASE"/>
    <property type="match status" value="1"/>
</dbReference>
<dbReference type="Pfam" id="PF02782">
    <property type="entry name" value="FGGY_C"/>
    <property type="match status" value="1"/>
</dbReference>
<dbReference type="Pfam" id="PF00370">
    <property type="entry name" value="FGGY_N"/>
    <property type="match status" value="1"/>
</dbReference>
<dbReference type="SUPFAM" id="SSF53067">
    <property type="entry name" value="Actin-like ATPase domain"/>
    <property type="match status" value="2"/>
</dbReference>